<comment type="function">
    <text evidence="1">A translational regulator that binds mRNA to regulate translation initiation and/or mRNA stability. Usually binds in the 5'-UTR at or near the Shine-Dalgarno sequence preventing ribosome-binding, thus repressing translation. Its main target seems to be the major flagellin gene, while its function is anatagonized by FliW.</text>
</comment>
<comment type="subunit">
    <text evidence="1">Homodimer; the beta-strands of each monomer intercalate to form a hydrophobic core, while the alpha-helices form wings that extend away from the core.</text>
</comment>
<comment type="subcellular location">
    <subcellularLocation>
        <location evidence="1">Cytoplasm</location>
    </subcellularLocation>
</comment>
<comment type="similarity">
    <text evidence="1">Belongs to the CsrA/RsmA family.</text>
</comment>
<name>CSRA_DESRM</name>
<feature type="chain" id="PRO_1000071568" description="Translational regulator CsrA">
    <location>
        <begin position="1"/>
        <end position="80"/>
    </location>
</feature>
<reference key="1">
    <citation type="submission" date="2007-03" db="EMBL/GenBank/DDBJ databases">
        <title>Complete sequence of Desulfotomaculum reducens MI-1.</title>
        <authorList>
            <consortium name="US DOE Joint Genome Institute"/>
            <person name="Copeland A."/>
            <person name="Lucas S."/>
            <person name="Lapidus A."/>
            <person name="Barry K."/>
            <person name="Detter J.C."/>
            <person name="Glavina del Rio T."/>
            <person name="Hammon N."/>
            <person name="Israni S."/>
            <person name="Dalin E."/>
            <person name="Tice H."/>
            <person name="Pitluck S."/>
            <person name="Sims D."/>
            <person name="Brettin T."/>
            <person name="Bruce D."/>
            <person name="Han C."/>
            <person name="Tapia R."/>
            <person name="Schmutz J."/>
            <person name="Larimer F."/>
            <person name="Land M."/>
            <person name="Hauser L."/>
            <person name="Kyrpides N."/>
            <person name="Kim E."/>
            <person name="Tebo B.M."/>
            <person name="Richardson P."/>
        </authorList>
    </citation>
    <scope>NUCLEOTIDE SEQUENCE [LARGE SCALE GENOMIC DNA]</scope>
    <source>
        <strain>ATCC BAA-1160 / DSM 100696 / MI-1</strain>
    </source>
</reference>
<protein>
    <recommendedName>
        <fullName evidence="1">Translational regulator CsrA</fullName>
    </recommendedName>
</protein>
<evidence type="ECO:0000255" key="1">
    <source>
        <dbReference type="HAMAP-Rule" id="MF_00167"/>
    </source>
</evidence>
<dbReference type="EMBL" id="CP000612">
    <property type="protein sequence ID" value="ABO50927.1"/>
    <property type="molecule type" value="Genomic_DNA"/>
</dbReference>
<dbReference type="RefSeq" id="WP_011878725.1">
    <property type="nucleotide sequence ID" value="NC_009253.1"/>
</dbReference>
<dbReference type="SMR" id="A4J774"/>
<dbReference type="STRING" id="349161.Dred_2417"/>
<dbReference type="KEGG" id="drm:Dred_2417"/>
<dbReference type="eggNOG" id="COG1551">
    <property type="taxonomic scope" value="Bacteria"/>
</dbReference>
<dbReference type="HOGENOM" id="CLU_164837_0_0_9"/>
<dbReference type="OrthoDB" id="9809061at2"/>
<dbReference type="Proteomes" id="UP000001556">
    <property type="component" value="Chromosome"/>
</dbReference>
<dbReference type="GO" id="GO:0005829">
    <property type="term" value="C:cytosol"/>
    <property type="evidence" value="ECO:0007669"/>
    <property type="project" value="TreeGrafter"/>
</dbReference>
<dbReference type="GO" id="GO:0048027">
    <property type="term" value="F:mRNA 5'-UTR binding"/>
    <property type="evidence" value="ECO:0007669"/>
    <property type="project" value="UniProtKB-UniRule"/>
</dbReference>
<dbReference type="GO" id="GO:0044781">
    <property type="term" value="P:bacterial-type flagellum organization"/>
    <property type="evidence" value="ECO:0007669"/>
    <property type="project" value="UniProtKB-KW"/>
</dbReference>
<dbReference type="GO" id="GO:0006402">
    <property type="term" value="P:mRNA catabolic process"/>
    <property type="evidence" value="ECO:0007669"/>
    <property type="project" value="InterPro"/>
</dbReference>
<dbReference type="GO" id="GO:0045947">
    <property type="term" value="P:negative regulation of translational initiation"/>
    <property type="evidence" value="ECO:0007669"/>
    <property type="project" value="UniProtKB-UniRule"/>
</dbReference>
<dbReference type="GO" id="GO:1902208">
    <property type="term" value="P:regulation of bacterial-type flagellum assembly"/>
    <property type="evidence" value="ECO:0007669"/>
    <property type="project" value="UniProtKB-UniRule"/>
</dbReference>
<dbReference type="GO" id="GO:0006109">
    <property type="term" value="P:regulation of carbohydrate metabolic process"/>
    <property type="evidence" value="ECO:0007669"/>
    <property type="project" value="InterPro"/>
</dbReference>
<dbReference type="FunFam" id="2.60.40.4380:FF:000002">
    <property type="entry name" value="Translational regulator CsrA"/>
    <property type="match status" value="1"/>
</dbReference>
<dbReference type="Gene3D" id="2.60.40.4380">
    <property type="entry name" value="Translational regulator CsrA"/>
    <property type="match status" value="1"/>
</dbReference>
<dbReference type="HAMAP" id="MF_00167">
    <property type="entry name" value="CsrA"/>
    <property type="match status" value="1"/>
</dbReference>
<dbReference type="InterPro" id="IPR003751">
    <property type="entry name" value="CsrA"/>
</dbReference>
<dbReference type="InterPro" id="IPR036107">
    <property type="entry name" value="CsrA_sf"/>
</dbReference>
<dbReference type="NCBIfam" id="TIGR00202">
    <property type="entry name" value="csrA"/>
    <property type="match status" value="1"/>
</dbReference>
<dbReference type="NCBIfam" id="NF002469">
    <property type="entry name" value="PRK01712.1"/>
    <property type="match status" value="1"/>
</dbReference>
<dbReference type="PANTHER" id="PTHR34984">
    <property type="entry name" value="CARBON STORAGE REGULATOR"/>
    <property type="match status" value="1"/>
</dbReference>
<dbReference type="PANTHER" id="PTHR34984:SF1">
    <property type="entry name" value="CARBON STORAGE REGULATOR"/>
    <property type="match status" value="1"/>
</dbReference>
<dbReference type="Pfam" id="PF02599">
    <property type="entry name" value="CsrA"/>
    <property type="match status" value="1"/>
</dbReference>
<dbReference type="SUPFAM" id="SSF117130">
    <property type="entry name" value="CsrA-like"/>
    <property type="match status" value="1"/>
</dbReference>
<accession>A4J774</accession>
<gene>
    <name evidence="1" type="primary">csrA</name>
    <name type="ordered locus">Dred_2417</name>
</gene>
<organism>
    <name type="scientific">Desulforamulus reducens (strain ATCC BAA-1160 / DSM 100696 / MI-1)</name>
    <name type="common">Desulfotomaculum reducens</name>
    <dbReference type="NCBI Taxonomy" id="349161"/>
    <lineage>
        <taxon>Bacteria</taxon>
        <taxon>Bacillati</taxon>
        <taxon>Bacillota</taxon>
        <taxon>Clostridia</taxon>
        <taxon>Eubacteriales</taxon>
        <taxon>Peptococcaceae</taxon>
        <taxon>Desulforamulus</taxon>
    </lineage>
</organism>
<sequence length="80" mass="8825">MLILSRKKNESIHIGDNIIITVVDIGGDNIKIGIDAPKNVQIFRSELLKAVEQENKNAVSSKSVIQDLAQLIKGDEKKQT</sequence>
<proteinExistence type="inferred from homology"/>
<keyword id="KW-1005">Bacterial flagellum biogenesis</keyword>
<keyword id="KW-0963">Cytoplasm</keyword>
<keyword id="KW-1185">Reference proteome</keyword>
<keyword id="KW-0678">Repressor</keyword>
<keyword id="KW-0694">RNA-binding</keyword>
<keyword id="KW-0810">Translation regulation</keyword>